<accession>Q59YK4</accession>
<accession>A0A1D8PNA6</accession>
<accession>Q59YZ2</accession>
<protein>
    <recommendedName>
        <fullName>pH-response regulator protein palH/RIM21</fullName>
    </recommendedName>
</protein>
<dbReference type="EMBL" id="CP017627">
    <property type="protein sequence ID" value="AOW29624.1"/>
    <property type="molecule type" value="Genomic_DNA"/>
</dbReference>
<dbReference type="RefSeq" id="XP_714594.1">
    <property type="nucleotide sequence ID" value="XM_709501.1"/>
</dbReference>
<dbReference type="FunCoup" id="Q59YK4">
    <property type="interactions" value="44"/>
</dbReference>
<dbReference type="STRING" id="237561.Q59YK4"/>
<dbReference type="EnsemblFungi" id="C5_01950C_A-T">
    <property type="protein sequence ID" value="C5_01950C_A-T-p1"/>
    <property type="gene ID" value="C5_01950C_A"/>
</dbReference>
<dbReference type="GeneID" id="3643739"/>
<dbReference type="KEGG" id="cal:CAALFM_C501950CA"/>
<dbReference type="CGD" id="CAL0000199829">
    <property type="gene designation" value="RIM21"/>
</dbReference>
<dbReference type="VEuPathDB" id="FungiDB:C5_01950C_A"/>
<dbReference type="eggNOG" id="ENOG502QWMT">
    <property type="taxonomic scope" value="Eukaryota"/>
</dbReference>
<dbReference type="HOGENOM" id="CLU_026111_0_0_1"/>
<dbReference type="InParanoid" id="Q59YK4"/>
<dbReference type="OMA" id="CVVIPWE"/>
<dbReference type="OrthoDB" id="5393256at2759"/>
<dbReference type="PRO" id="PR:Q59YK4"/>
<dbReference type="Proteomes" id="UP000000559">
    <property type="component" value="Chromosome 5"/>
</dbReference>
<dbReference type="GO" id="GO:0005886">
    <property type="term" value="C:plasma membrane"/>
    <property type="evidence" value="ECO:0000318"/>
    <property type="project" value="GO_Central"/>
</dbReference>
<dbReference type="GO" id="GO:0071469">
    <property type="term" value="P:cellular response to alkaline pH"/>
    <property type="evidence" value="ECO:0000315"/>
    <property type="project" value="CGD"/>
</dbReference>
<dbReference type="GO" id="GO:0071285">
    <property type="term" value="P:cellular response to lithium ion"/>
    <property type="evidence" value="ECO:0000315"/>
    <property type="project" value="CGD"/>
</dbReference>
<dbReference type="GO" id="GO:0036244">
    <property type="term" value="P:cellular response to neutral pH"/>
    <property type="evidence" value="ECO:0000315"/>
    <property type="project" value="CGD"/>
</dbReference>
<dbReference type="GO" id="GO:0071467">
    <property type="term" value="P:cellular response to pH"/>
    <property type="evidence" value="ECO:0000315"/>
    <property type="project" value="CGD"/>
</dbReference>
<dbReference type="GO" id="GO:0030447">
    <property type="term" value="P:filamentous growth"/>
    <property type="evidence" value="ECO:0000315"/>
    <property type="project" value="CGD"/>
</dbReference>
<dbReference type="GO" id="GO:0036178">
    <property type="term" value="P:filamentous growth of a population of unicellular organisms in response to neutral pH"/>
    <property type="evidence" value="ECO:0000315"/>
    <property type="project" value="CGD"/>
</dbReference>
<dbReference type="InterPro" id="IPR014844">
    <property type="entry name" value="PalH"/>
</dbReference>
<dbReference type="PANTHER" id="PTHR35779">
    <property type="entry name" value="PH-RESPONSE REGULATOR PROTEIN PALH/RIM21"/>
    <property type="match status" value="1"/>
</dbReference>
<dbReference type="PANTHER" id="PTHR35779:SF1">
    <property type="entry name" value="PH-RESPONSE REGULATOR PROTEIN PALH_RIM21"/>
    <property type="match status" value="1"/>
</dbReference>
<dbReference type="Pfam" id="PF08733">
    <property type="entry name" value="PalH"/>
    <property type="match status" value="1"/>
</dbReference>
<sequence>MYWKNAWWVGTVYSSCEPIELPEGMLISKQYETYPITTVSKAIYKQMCYRNCIPVLNTNVGFVIDTFAKPLPIVSQSWREFTKDSLRGSFAYSVVSIIYAIAVSAVIIWFLTIFVLTNYTIKPSWLLKTSTILSTVYILVVVIKSILILHGQQRDGYLHGAKLLSELNDYNPIQIIDLIVVLLLQINQVQIIMRIFQRQKDKRMALLIGIVATLASQVIWAIAQFYTPADANEASDILPAFIYLVRIAMALCYAAIITVFFISKIQIILANKKIWLLTLLTFILIYSPVAFFVADVSNAFVYELSEIFSVVNYVIGVVIPWEWCNKFNLIMKAKEKEGVLGRRFYEDELYELDRFELFVEEQMPEDEDNGDTHSDSPGNELNGGAHHNSQEQSDRLIGSNSPTNKPHNGNNTDPTSRFRQLLTNTKDAFLTLTDNIIAAGFAIPRSVSVSTQSLTGRYRNNSTARTEYTKEVVPDFSPEMFLQPEGSSHITETLSEQNAAPSTTNSNHRRRNVYVYSRKEVILDVSSDE</sequence>
<keyword id="KW-0472">Membrane</keyword>
<keyword id="KW-1185">Reference proteome</keyword>
<keyword id="KW-0812">Transmembrane</keyword>
<keyword id="KW-1133">Transmembrane helix</keyword>
<name>PALH_CANAL</name>
<feature type="chain" id="PRO_0000058197" description="pH-response regulator protein palH/RIM21">
    <location>
        <begin position="1"/>
        <end position="529"/>
    </location>
</feature>
<feature type="topological domain" description="Extracellular" evidence="2">
    <location>
        <begin position="1"/>
        <end position="96"/>
    </location>
</feature>
<feature type="transmembrane region" description="Helical" evidence="2">
    <location>
        <begin position="97"/>
        <end position="117"/>
    </location>
</feature>
<feature type="topological domain" description="Cytoplasmic" evidence="2">
    <location>
        <begin position="118"/>
        <end position="130"/>
    </location>
</feature>
<feature type="transmembrane region" description="Helical" evidence="2">
    <location>
        <begin position="131"/>
        <end position="151"/>
    </location>
</feature>
<feature type="topological domain" description="Extracellular" evidence="2">
    <location>
        <begin position="152"/>
        <end position="172"/>
    </location>
</feature>
<feature type="transmembrane region" description="Helical" evidence="2">
    <location>
        <begin position="173"/>
        <end position="193"/>
    </location>
</feature>
<feature type="topological domain" description="Cytoplasmic" evidence="2">
    <location>
        <begin position="194"/>
        <end position="204"/>
    </location>
</feature>
<feature type="transmembrane region" description="Helical" evidence="2">
    <location>
        <begin position="205"/>
        <end position="225"/>
    </location>
</feature>
<feature type="topological domain" description="Extracellular" evidence="2">
    <location>
        <begin position="226"/>
        <end position="241"/>
    </location>
</feature>
<feature type="transmembrane region" description="Helical" evidence="2">
    <location>
        <begin position="242"/>
        <end position="262"/>
    </location>
</feature>
<feature type="topological domain" description="Cytoplasmic" evidence="2">
    <location>
        <begin position="263"/>
        <end position="273"/>
    </location>
</feature>
<feature type="transmembrane region" description="Helical" evidence="2">
    <location>
        <begin position="274"/>
        <end position="294"/>
    </location>
</feature>
<feature type="topological domain" description="Extracellular" evidence="2">
    <location>
        <begin position="295"/>
        <end position="298"/>
    </location>
</feature>
<feature type="transmembrane region" description="Helical" evidence="2">
    <location>
        <begin position="299"/>
        <end position="319"/>
    </location>
</feature>
<feature type="topological domain" description="Cytoplasmic" evidence="2">
    <location>
        <begin position="320"/>
        <end position="529"/>
    </location>
</feature>
<feature type="region of interest" description="Disordered" evidence="3">
    <location>
        <begin position="364"/>
        <end position="417"/>
    </location>
</feature>
<feature type="compositionally biased region" description="Polar residues" evidence="3">
    <location>
        <begin position="398"/>
        <end position="417"/>
    </location>
</feature>
<comment type="function">
    <text evidence="1">Required for the proteolytic cleavage of the transcription factor RIM101 in response to alkaline ambient pH.</text>
</comment>
<comment type="subcellular location">
    <subcellularLocation>
        <location evidence="4">Membrane</location>
        <topology evidence="4">Multi-pass membrane protein</topology>
    </subcellularLocation>
</comment>
<comment type="similarity">
    <text evidence="4">Belongs to the palH/RIM21 family.</text>
</comment>
<gene>
    <name type="primary">RIM21</name>
    <name type="ordered locus">CAALFM_C501950CA</name>
    <name type="ORF">CaO19.10686</name>
    <name type="ORF">CaO19.3176</name>
</gene>
<reference key="1">
    <citation type="journal article" date="2004" name="Proc. Natl. Acad. Sci. U.S.A.">
        <title>The diploid genome sequence of Candida albicans.</title>
        <authorList>
            <person name="Jones T."/>
            <person name="Federspiel N.A."/>
            <person name="Chibana H."/>
            <person name="Dungan J."/>
            <person name="Kalman S."/>
            <person name="Magee B.B."/>
            <person name="Newport G."/>
            <person name="Thorstenson Y.R."/>
            <person name="Agabian N."/>
            <person name="Magee P.T."/>
            <person name="Davis R.W."/>
            <person name="Scherer S."/>
        </authorList>
    </citation>
    <scope>NUCLEOTIDE SEQUENCE [LARGE SCALE GENOMIC DNA]</scope>
    <source>
        <strain>SC5314 / ATCC MYA-2876</strain>
    </source>
</reference>
<reference key="2">
    <citation type="journal article" date="2007" name="Genome Biol.">
        <title>Assembly of the Candida albicans genome into sixteen supercontigs aligned on the eight chromosomes.</title>
        <authorList>
            <person name="van het Hoog M."/>
            <person name="Rast T.J."/>
            <person name="Martchenko M."/>
            <person name="Grindle S."/>
            <person name="Dignard D."/>
            <person name="Hogues H."/>
            <person name="Cuomo C."/>
            <person name="Berriman M."/>
            <person name="Scherer S."/>
            <person name="Magee B.B."/>
            <person name="Whiteway M."/>
            <person name="Chibana H."/>
            <person name="Nantel A."/>
            <person name="Magee P.T."/>
        </authorList>
    </citation>
    <scope>GENOME REANNOTATION</scope>
    <source>
        <strain>SC5314 / ATCC MYA-2876</strain>
    </source>
</reference>
<reference key="3">
    <citation type="journal article" date="2013" name="Genome Biol.">
        <title>Assembly of a phased diploid Candida albicans genome facilitates allele-specific measurements and provides a simple model for repeat and indel structure.</title>
        <authorList>
            <person name="Muzzey D."/>
            <person name="Schwartz K."/>
            <person name="Weissman J.S."/>
            <person name="Sherlock G."/>
        </authorList>
    </citation>
    <scope>NUCLEOTIDE SEQUENCE [LARGE SCALE GENOMIC DNA]</scope>
    <scope>GENOME REANNOTATION</scope>
    <source>
        <strain>SC5314 / ATCC MYA-2876</strain>
    </source>
</reference>
<proteinExistence type="inferred from homology"/>
<organism>
    <name type="scientific">Candida albicans (strain SC5314 / ATCC MYA-2876)</name>
    <name type="common">Yeast</name>
    <dbReference type="NCBI Taxonomy" id="237561"/>
    <lineage>
        <taxon>Eukaryota</taxon>
        <taxon>Fungi</taxon>
        <taxon>Dikarya</taxon>
        <taxon>Ascomycota</taxon>
        <taxon>Saccharomycotina</taxon>
        <taxon>Pichiomycetes</taxon>
        <taxon>Debaryomycetaceae</taxon>
        <taxon>Candida/Lodderomyces clade</taxon>
        <taxon>Candida</taxon>
    </lineage>
</organism>
<evidence type="ECO:0000250" key="1"/>
<evidence type="ECO:0000255" key="2"/>
<evidence type="ECO:0000256" key="3">
    <source>
        <dbReference type="SAM" id="MobiDB-lite"/>
    </source>
</evidence>
<evidence type="ECO:0000305" key="4"/>